<comment type="catalytic activity">
    <reaction>
        <text>ATP + H2O = ADP + phosphate + H(+)</text>
        <dbReference type="Rhea" id="RHEA:13065"/>
        <dbReference type="ChEBI" id="CHEBI:15377"/>
        <dbReference type="ChEBI" id="CHEBI:15378"/>
        <dbReference type="ChEBI" id="CHEBI:30616"/>
        <dbReference type="ChEBI" id="CHEBI:43474"/>
        <dbReference type="ChEBI" id="CHEBI:456216"/>
        <dbReference type="EC" id="3.6.4.13"/>
    </reaction>
</comment>
<comment type="domain">
    <text>The Q motif is unique to and characteristic of the DEAD box family of RNA helicases and controls ATP binding and hydrolysis.</text>
</comment>
<comment type="similarity">
    <text evidence="4">Belongs to the DEAD box helicase family.</text>
</comment>
<comment type="sequence caution" evidence="4">
    <conflict type="erroneous initiation">
        <sequence resource="EMBL-CDS" id="BAB10456"/>
    </conflict>
    <text>Truncated N-terminus.</text>
</comment>
<feature type="chain" id="PRO_0000239171" description="DEAD-box ATP-dependent RNA helicase 31">
    <location>
        <begin position="1"/>
        <end position="716"/>
    </location>
</feature>
<feature type="domain" description="Helicase ATP-binding" evidence="1">
    <location>
        <begin position="279"/>
        <end position="462"/>
    </location>
</feature>
<feature type="domain" description="Helicase C-terminal" evidence="2">
    <location>
        <begin position="497"/>
        <end position="643"/>
    </location>
</feature>
<feature type="region of interest" description="Disordered" evidence="3">
    <location>
        <begin position="99"/>
        <end position="188"/>
    </location>
</feature>
<feature type="short sequence motif" description="Q motif">
    <location>
        <begin position="248"/>
        <end position="276"/>
    </location>
</feature>
<feature type="short sequence motif" description="DEAD box">
    <location>
        <begin position="410"/>
        <end position="413"/>
    </location>
</feature>
<feature type="compositionally biased region" description="Basic and acidic residues" evidence="3">
    <location>
        <begin position="110"/>
        <end position="121"/>
    </location>
</feature>
<feature type="compositionally biased region" description="Polar residues" evidence="3">
    <location>
        <begin position="144"/>
        <end position="153"/>
    </location>
</feature>
<feature type="compositionally biased region" description="Basic and acidic residues" evidence="3">
    <location>
        <begin position="155"/>
        <end position="188"/>
    </location>
</feature>
<feature type="binding site" evidence="1">
    <location>
        <begin position="292"/>
        <end position="299"/>
    </location>
    <ligand>
        <name>ATP</name>
        <dbReference type="ChEBI" id="CHEBI:30616"/>
    </ligand>
</feature>
<dbReference type="EC" id="3.6.4.13"/>
<dbReference type="EMBL" id="AB005234">
    <property type="protein sequence ID" value="BAB10456.1"/>
    <property type="status" value="ALT_INIT"/>
    <property type="molecule type" value="Genomic_DNA"/>
</dbReference>
<dbReference type="EMBL" id="CP002688">
    <property type="protein sequence ID" value="ANM68626.1"/>
    <property type="molecule type" value="Genomic_DNA"/>
</dbReference>
<dbReference type="EMBL" id="AJ010477">
    <property type="protein sequence ID" value="CAA09216.1"/>
    <property type="molecule type" value="mRNA"/>
</dbReference>
<dbReference type="PIR" id="T51350">
    <property type="entry name" value="T51350"/>
</dbReference>
<dbReference type="RefSeq" id="NP_001318870.1">
    <property type="nucleotide sequence ID" value="NM_001345599.1"/>
</dbReference>
<dbReference type="RefSeq" id="NP_201168.3">
    <property type="nucleotide sequence ID" value="NM_125758.3"/>
</dbReference>
<dbReference type="SMR" id="Q9FFQ1"/>
<dbReference type="FunCoup" id="Q9FFQ1">
    <property type="interactions" value="637"/>
</dbReference>
<dbReference type="STRING" id="3702.Q9FFQ1"/>
<dbReference type="iPTMnet" id="Q9FFQ1"/>
<dbReference type="PaxDb" id="3702-AT5G63630.1"/>
<dbReference type="ProteomicsDB" id="237000"/>
<dbReference type="EnsemblPlants" id="AT5G63630.2">
    <property type="protein sequence ID" value="AT5G63630.2"/>
    <property type="gene ID" value="AT5G63630"/>
</dbReference>
<dbReference type="GeneID" id="836483"/>
<dbReference type="Gramene" id="AT5G63630.2">
    <property type="protein sequence ID" value="AT5G63630.2"/>
    <property type="gene ID" value="AT5G63630"/>
</dbReference>
<dbReference type="KEGG" id="ath:AT5G63630"/>
<dbReference type="Araport" id="AT5G63630"/>
<dbReference type="TAIR" id="AT5G63630"/>
<dbReference type="eggNOG" id="KOG0342">
    <property type="taxonomic scope" value="Eukaryota"/>
</dbReference>
<dbReference type="HOGENOM" id="CLU_003041_26_6_1"/>
<dbReference type="InParanoid" id="Q9FFQ1"/>
<dbReference type="PhylomeDB" id="Q9FFQ1"/>
<dbReference type="CD-CODE" id="4299E36E">
    <property type="entry name" value="Nucleolus"/>
</dbReference>
<dbReference type="PRO" id="PR:Q9FFQ1"/>
<dbReference type="Proteomes" id="UP000006548">
    <property type="component" value="Chromosome 5"/>
</dbReference>
<dbReference type="ExpressionAtlas" id="Q9FFQ1">
    <property type="expression patterns" value="baseline and differential"/>
</dbReference>
<dbReference type="GO" id="GO:0005524">
    <property type="term" value="F:ATP binding"/>
    <property type="evidence" value="ECO:0007669"/>
    <property type="project" value="UniProtKB-KW"/>
</dbReference>
<dbReference type="GO" id="GO:0016887">
    <property type="term" value="F:ATP hydrolysis activity"/>
    <property type="evidence" value="ECO:0007669"/>
    <property type="project" value="RHEA"/>
</dbReference>
<dbReference type="GO" id="GO:0003723">
    <property type="term" value="F:RNA binding"/>
    <property type="evidence" value="ECO:0007669"/>
    <property type="project" value="UniProtKB-KW"/>
</dbReference>
<dbReference type="GO" id="GO:0003724">
    <property type="term" value="F:RNA helicase activity"/>
    <property type="evidence" value="ECO:0007669"/>
    <property type="project" value="UniProtKB-EC"/>
</dbReference>
<dbReference type="CDD" id="cd17964">
    <property type="entry name" value="DEADc_MSS116"/>
    <property type="match status" value="1"/>
</dbReference>
<dbReference type="CDD" id="cd18787">
    <property type="entry name" value="SF2_C_DEAD"/>
    <property type="match status" value="1"/>
</dbReference>
<dbReference type="Gene3D" id="3.40.50.300">
    <property type="entry name" value="P-loop containing nucleotide triphosphate hydrolases"/>
    <property type="match status" value="2"/>
</dbReference>
<dbReference type="InterPro" id="IPR011545">
    <property type="entry name" value="DEAD/DEAH_box_helicase_dom"/>
</dbReference>
<dbReference type="InterPro" id="IPR014001">
    <property type="entry name" value="Helicase_ATP-bd"/>
</dbReference>
<dbReference type="InterPro" id="IPR001650">
    <property type="entry name" value="Helicase_C-like"/>
</dbReference>
<dbReference type="InterPro" id="IPR027417">
    <property type="entry name" value="P-loop_NTPase"/>
</dbReference>
<dbReference type="InterPro" id="IPR014014">
    <property type="entry name" value="RNA_helicase_DEAD_Q_motif"/>
</dbReference>
<dbReference type="PANTHER" id="PTHR24031">
    <property type="entry name" value="RNA HELICASE"/>
    <property type="match status" value="1"/>
</dbReference>
<dbReference type="Pfam" id="PF00270">
    <property type="entry name" value="DEAD"/>
    <property type="match status" value="1"/>
</dbReference>
<dbReference type="Pfam" id="PF00271">
    <property type="entry name" value="Helicase_C"/>
    <property type="match status" value="1"/>
</dbReference>
<dbReference type="SMART" id="SM00487">
    <property type="entry name" value="DEXDc"/>
    <property type="match status" value="1"/>
</dbReference>
<dbReference type="SMART" id="SM00490">
    <property type="entry name" value="HELICc"/>
    <property type="match status" value="1"/>
</dbReference>
<dbReference type="SUPFAM" id="SSF52540">
    <property type="entry name" value="P-loop containing nucleoside triphosphate hydrolases"/>
    <property type="match status" value="1"/>
</dbReference>
<dbReference type="PROSITE" id="PS51192">
    <property type="entry name" value="HELICASE_ATP_BIND_1"/>
    <property type="match status" value="1"/>
</dbReference>
<dbReference type="PROSITE" id="PS51194">
    <property type="entry name" value="HELICASE_CTER"/>
    <property type="match status" value="1"/>
</dbReference>
<dbReference type="PROSITE" id="PS51195">
    <property type="entry name" value="Q_MOTIF"/>
    <property type="match status" value="1"/>
</dbReference>
<sequence>MPLNFPLRIRFFAHSLSGTHLSYNTSSSVPLLFRIFSSGLNHFEFGSRINFSTRPNRDQPEFERRIRDGGEIRASKSLIEDEEELSNWVSGFRTGSSRGILKSDDEDEEDRSRGRNQEKRGIRNQVDSFRNKRYGGDRERGFNSRIQGKSSEASFRGRKETSFSRDREDEKGLRKREDLRLEDESSDEDVKSLVMGDIGDLLSEDDEEEDQDYDFLKKKAVSAFGFDKENVIEADKTRNANDSYLTKTRFDHYPLSPLSLKAIKDAGYETMTVVQEATLPIILKGKDVLAKAKTGTGKTVAFLLPSIEVVVKSPPTSPDNKRPPILALVICPTRELANQAATEANTLLKYHPSIGVQVVIGGTRLGLEQKRMQTNPCQILVATPGRLKDHIENTPGFATRLKGVKVLVLDEADHLLDMGFRKDIERIISAVPKERQTFLFSATVPEEVRQICLVALRRDHEFVNCVHEGTIETHQQVRQMHMIASLDRHFSLLYTLLREHIMGNVDYKVIVFCTTAMVTKLVADLLGELNLNVREIHSRKPQSYRTRVSNEFRKSKGLILVTSDVSARGVDYPDVTLVLQVGLPKDREQYIHRLGRTGRKGKEGEGILLLAPWEEYFLSSLKDLPITKSPLPSIDPETVKKVQKALCHVEMRNKEAAYQAWLGYYNSQKMIGRDKDRLVELANEFSRSMGLDNPPAIPKLILGKMGLKNVPGLRAK</sequence>
<evidence type="ECO:0000255" key="1">
    <source>
        <dbReference type="PROSITE-ProRule" id="PRU00541"/>
    </source>
</evidence>
<evidence type="ECO:0000255" key="2">
    <source>
        <dbReference type="PROSITE-ProRule" id="PRU00542"/>
    </source>
</evidence>
<evidence type="ECO:0000256" key="3">
    <source>
        <dbReference type="SAM" id="MobiDB-lite"/>
    </source>
</evidence>
<evidence type="ECO:0000305" key="4"/>
<proteinExistence type="evidence at transcript level"/>
<name>RH31_ARATH</name>
<gene>
    <name type="primary">RH31</name>
    <name type="ordered locus">At5g63630</name>
    <name type="ORF">MBK5.11</name>
</gene>
<organism>
    <name type="scientific">Arabidopsis thaliana</name>
    <name type="common">Mouse-ear cress</name>
    <dbReference type="NCBI Taxonomy" id="3702"/>
    <lineage>
        <taxon>Eukaryota</taxon>
        <taxon>Viridiplantae</taxon>
        <taxon>Streptophyta</taxon>
        <taxon>Embryophyta</taxon>
        <taxon>Tracheophyta</taxon>
        <taxon>Spermatophyta</taxon>
        <taxon>Magnoliopsida</taxon>
        <taxon>eudicotyledons</taxon>
        <taxon>Gunneridae</taxon>
        <taxon>Pentapetalae</taxon>
        <taxon>rosids</taxon>
        <taxon>malvids</taxon>
        <taxon>Brassicales</taxon>
        <taxon>Brassicaceae</taxon>
        <taxon>Camelineae</taxon>
        <taxon>Arabidopsis</taxon>
    </lineage>
</organism>
<protein>
    <recommendedName>
        <fullName>DEAD-box ATP-dependent RNA helicase 31</fullName>
        <ecNumber>3.6.4.13</ecNumber>
    </recommendedName>
</protein>
<reference key="1">
    <citation type="journal article" date="1997" name="DNA Res.">
        <title>Structural analysis of Arabidopsis thaliana chromosome 5. I. Sequence features of the 1.6 Mb regions covered by twenty physically assigned P1 clones.</title>
        <authorList>
            <person name="Sato S."/>
            <person name="Kotani H."/>
            <person name="Nakamura Y."/>
            <person name="Kaneko T."/>
            <person name="Asamizu E."/>
            <person name="Fukami M."/>
            <person name="Miyajima N."/>
            <person name="Tabata S."/>
        </authorList>
    </citation>
    <scope>NUCLEOTIDE SEQUENCE [LARGE SCALE GENOMIC DNA]</scope>
    <source>
        <strain>cv. Columbia</strain>
    </source>
</reference>
<reference key="2">
    <citation type="journal article" date="2017" name="Plant J.">
        <title>Araport11: a complete reannotation of the Arabidopsis thaliana reference genome.</title>
        <authorList>
            <person name="Cheng C.Y."/>
            <person name="Krishnakumar V."/>
            <person name="Chan A.P."/>
            <person name="Thibaud-Nissen F."/>
            <person name="Schobel S."/>
            <person name="Town C.D."/>
        </authorList>
    </citation>
    <scope>GENOME REANNOTATION</scope>
    <source>
        <strain>cv. Columbia</strain>
    </source>
</reference>
<reference key="3">
    <citation type="journal article" date="1999" name="Nucleic Acids Res.">
        <title>The DEAD box RNA helicase family in Arabidopsis thaliana.</title>
        <authorList>
            <person name="Aubourg S."/>
            <person name="Kreis M."/>
            <person name="Lecharny A."/>
        </authorList>
    </citation>
    <scope>NUCLEOTIDE SEQUENCE [MRNA] OF 326-620</scope>
    <source>
        <strain>cv. Columbia</strain>
    </source>
</reference>
<reference key="4">
    <citation type="journal article" date="2004" name="Plant Biotechnol. J.">
        <title>DEAD-box RNA helicases in Arabidopsis thaliana: establishing a link between quantitative expression, gene structure and evolution of a family of genes.</title>
        <authorList>
            <person name="Mingam A."/>
            <person name="Toffano-Nioche C."/>
            <person name="Brunaud V."/>
            <person name="Boudet N."/>
            <person name="Kreis M."/>
            <person name="Lecharny A."/>
        </authorList>
    </citation>
    <scope>GENE FAMILY</scope>
    <scope>NOMENCLATURE</scope>
</reference>
<reference key="5">
    <citation type="journal article" date="2013" name="PLoS ONE">
        <title>Genome-wide comparative in silico analysis of the RNA helicase gene family in Zea mays and Glycine max: a comparison with Arabidopsis and Oryza sativa.</title>
        <authorList>
            <person name="Xu R."/>
            <person name="Zhang S."/>
            <person name="Huang J."/>
            <person name="Zheng C."/>
        </authorList>
    </citation>
    <scope>GENE FAMILY</scope>
</reference>
<keyword id="KW-0067">ATP-binding</keyword>
<keyword id="KW-0347">Helicase</keyword>
<keyword id="KW-0378">Hydrolase</keyword>
<keyword id="KW-0547">Nucleotide-binding</keyword>
<keyword id="KW-1185">Reference proteome</keyword>
<keyword id="KW-0694">RNA-binding</keyword>
<accession>Q9FFQ1</accession>
<accession>F4KAS7</accession>
<accession>Q9ZRZ6</accession>